<accession>P08654</accession>
<name>MERD_SERMA</name>
<reference key="1">
    <citation type="journal article" date="1987" name="Proc. Natl. Acad. Sci. U.S.A.">
        <title>Cloning and DNA sequence of the mercuric- and organomercurial-resistance determinants of plasmid pDU1358.</title>
        <authorList>
            <person name="Griffin H.G."/>
            <person name="Foster T.J."/>
            <person name="Silver S."/>
            <person name="Misra T.K."/>
        </authorList>
    </citation>
    <scope>NUCLEOTIDE SEQUENCE [GENOMIC DNA]</scope>
</reference>
<protein>
    <recommendedName>
        <fullName>HTH-type transcriptional regulator MerD</fullName>
    </recommendedName>
    <alternativeName>
        <fullName>Mercuric resistance protein MerD</fullName>
    </alternativeName>
</protein>
<proteinExistence type="predicted"/>
<keyword id="KW-0238">DNA-binding</keyword>
<keyword id="KW-0475">Mercuric resistance</keyword>
<keyword id="KW-0614">Plasmid</keyword>
<keyword id="KW-0804">Transcription</keyword>
<keyword id="KW-0805">Transcription regulation</keyword>
<geneLocation type="plasmid">
    <name>pDU1358</name>
</geneLocation>
<evidence type="ECO:0000255" key="1">
    <source>
        <dbReference type="PROSITE-ProRule" id="PRU00254"/>
    </source>
</evidence>
<sequence length="121" mass="12954">MNAYTVSRLALDAGVSVHIVRDYLLRGLLRPVACTTGGYGLFDDAALQRLCFVRAAFEAGIGLGALARLCRALDAANCDETAAQLAVLRQFVERRREALANLEVQLAAMPTAPAQHAESLP</sequence>
<gene>
    <name type="primary">merD</name>
</gene>
<dbReference type="EMBL" id="M15049">
    <property type="protein sequence ID" value="AAA88370.1"/>
    <property type="molecule type" value="Genomic_DNA"/>
</dbReference>
<dbReference type="PIR" id="C29010">
    <property type="entry name" value="C29010"/>
</dbReference>
<dbReference type="RefSeq" id="WP_000995361.1">
    <property type="nucleotide sequence ID" value="NZ_LR890658.1"/>
</dbReference>
<dbReference type="RefSeq" id="YP_006964542.1">
    <property type="nucleotide sequence ID" value="NC_019344.1"/>
</dbReference>
<dbReference type="SMR" id="P08654"/>
<dbReference type="GeneID" id="93036300"/>
<dbReference type="GO" id="GO:0003677">
    <property type="term" value="F:DNA binding"/>
    <property type="evidence" value="ECO:0007669"/>
    <property type="project" value="UniProtKB-KW"/>
</dbReference>
<dbReference type="GO" id="GO:0003700">
    <property type="term" value="F:DNA-binding transcription factor activity"/>
    <property type="evidence" value="ECO:0007669"/>
    <property type="project" value="InterPro"/>
</dbReference>
<dbReference type="GO" id="GO:0045892">
    <property type="term" value="P:negative regulation of DNA-templated transcription"/>
    <property type="evidence" value="ECO:0007669"/>
    <property type="project" value="InterPro"/>
</dbReference>
<dbReference type="GO" id="GO:0046689">
    <property type="term" value="P:response to mercury ion"/>
    <property type="evidence" value="ECO:0007669"/>
    <property type="project" value="UniProtKB-KW"/>
</dbReference>
<dbReference type="CDD" id="cd01111">
    <property type="entry name" value="HTH_MerD"/>
    <property type="match status" value="1"/>
</dbReference>
<dbReference type="Gene3D" id="1.10.1660.10">
    <property type="match status" value="1"/>
</dbReference>
<dbReference type="InterPro" id="IPR009061">
    <property type="entry name" value="DNA-bd_dom_put_sf"/>
</dbReference>
<dbReference type="InterPro" id="IPR011797">
    <property type="entry name" value="MerD"/>
</dbReference>
<dbReference type="InterPro" id="IPR000551">
    <property type="entry name" value="MerR-type_HTH_dom"/>
</dbReference>
<dbReference type="InterPro" id="IPR047057">
    <property type="entry name" value="MerR_fam"/>
</dbReference>
<dbReference type="NCBIfam" id="NF033783">
    <property type="entry name" value="coreg_MerD"/>
    <property type="match status" value="1"/>
</dbReference>
<dbReference type="NCBIfam" id="TIGR02054">
    <property type="entry name" value="MerD"/>
    <property type="match status" value="1"/>
</dbReference>
<dbReference type="PANTHER" id="PTHR30204:SF93">
    <property type="entry name" value="HTH MERR-TYPE DOMAIN-CONTAINING PROTEIN"/>
    <property type="match status" value="1"/>
</dbReference>
<dbReference type="PANTHER" id="PTHR30204">
    <property type="entry name" value="REDOX-CYCLING DRUG-SENSING TRANSCRIPTIONAL ACTIVATOR SOXR"/>
    <property type="match status" value="1"/>
</dbReference>
<dbReference type="Pfam" id="PF13411">
    <property type="entry name" value="MerR_1"/>
    <property type="match status" value="1"/>
</dbReference>
<dbReference type="PRINTS" id="PR00040">
    <property type="entry name" value="HTHMERR"/>
</dbReference>
<dbReference type="SMART" id="SM00422">
    <property type="entry name" value="HTH_MERR"/>
    <property type="match status" value="1"/>
</dbReference>
<dbReference type="SUPFAM" id="SSF46955">
    <property type="entry name" value="Putative DNA-binding domain"/>
    <property type="match status" value="1"/>
</dbReference>
<dbReference type="PROSITE" id="PS50937">
    <property type="entry name" value="HTH_MERR_2"/>
    <property type="match status" value="1"/>
</dbReference>
<feature type="chain" id="PRO_0000098133" description="HTH-type transcriptional regulator MerD">
    <location>
        <begin position="1"/>
        <end position="121"/>
    </location>
</feature>
<feature type="domain" description="HTH merR-type" evidence="1">
    <location>
        <begin position="3"/>
        <end position="72"/>
    </location>
</feature>
<feature type="DNA-binding region" description="H-T-H motif" evidence="1">
    <location>
        <begin position="6"/>
        <end position="25"/>
    </location>
</feature>
<organism>
    <name type="scientific">Serratia marcescens</name>
    <dbReference type="NCBI Taxonomy" id="615"/>
    <lineage>
        <taxon>Bacteria</taxon>
        <taxon>Pseudomonadati</taxon>
        <taxon>Pseudomonadota</taxon>
        <taxon>Gammaproteobacteria</taxon>
        <taxon>Enterobacterales</taxon>
        <taxon>Yersiniaceae</taxon>
        <taxon>Serratia</taxon>
    </lineage>
</organism>